<sequence>MSGELNGNDTSAQAAVSAGSVLEGAAFADEGEQHNESMKTLVLGALGVVYGDIGTSPIYAFREALHAAATNGILARSDILGVVSLIFWALTLVVTVKYVLFVLRADNNGEGGILSLMALVRGALKGRPDLILGVGICGAALFFGDAVITPAISVLSAMEGLEIVAPNLTPFVVPATVVILVTLFSVQKLGTGRVAIVFGPIMALWFVALGASGLWHIFDDPTVMAALNPYYAVRFLTVSPAVAFVTVGAVFLAMTGAEALYADLGHFGRKPIVRAWLWIVFPCLLLNYFGQAAFILSHGEAAALPFFQMIPSFALWPMVLLATAATVIASQAVITGAYSVARQAVQLNILPRLEIQHTSEKLHGQIYIPRVNLLLGLAVVILVLGFEKSSNLAAAYGIAVTGNMLVTTVLLYIVMTRIWNWRVSRALPIILGFLVIDMLFFSANIIKVHEGGWASIGIATVLVLIMWTWVRGTRHLFQKTRKAEVPLDLIVEQMAKRPPTIVPGTAVFLTGDPKSAPTALMHSLKHYKVLHENNVILTVVTASKPWVASADRARVSQYNERFMLVTLTFGYMQQPNILRALGLCRRLGWKFDIMTTSFFLSRRSLKASVHSGMPLWQDKLFILLARTASDATEYFQIPTGRVVEIGTQVNI</sequence>
<reference key="1">
    <citation type="submission" date="2007-10" db="EMBL/GenBank/DDBJ databases">
        <title>Brucella canis ATCC 23365 whole genome shotgun sequencing project.</title>
        <authorList>
            <person name="Setubal J.C."/>
            <person name="Bowns C."/>
            <person name="Boyle S."/>
            <person name="Crasta O.R."/>
            <person name="Czar M.J."/>
            <person name="Dharmanolla C."/>
            <person name="Gillespie J.J."/>
            <person name="Kenyon R.W."/>
            <person name="Lu J."/>
            <person name="Mane S."/>
            <person name="Mohapatra S."/>
            <person name="Nagrani S."/>
            <person name="Purkayastha A."/>
            <person name="Rajasimha H.K."/>
            <person name="Shallom J.M."/>
            <person name="Shallom S."/>
            <person name="Shukla M."/>
            <person name="Snyder E.E."/>
            <person name="Sobral B.W."/>
            <person name="Wattam A.R."/>
            <person name="Will R."/>
            <person name="Williams K."/>
            <person name="Yoo H."/>
            <person name="Bruce D."/>
            <person name="Detter C."/>
            <person name="Munk C."/>
            <person name="Brettin T.S."/>
        </authorList>
    </citation>
    <scope>NUCLEOTIDE SEQUENCE [LARGE SCALE GENOMIC DNA]</scope>
    <source>
        <strain>ATCC 23365 / NCTC 10854 / RM-666</strain>
    </source>
</reference>
<gene>
    <name evidence="1" type="primary">kup</name>
    <name type="ordered locus">BCAN_A1414</name>
</gene>
<organism>
    <name type="scientific">Brucella canis (strain ATCC 23365 / NCTC 10854 / RM-666)</name>
    <dbReference type="NCBI Taxonomy" id="483179"/>
    <lineage>
        <taxon>Bacteria</taxon>
        <taxon>Pseudomonadati</taxon>
        <taxon>Pseudomonadota</taxon>
        <taxon>Alphaproteobacteria</taxon>
        <taxon>Hyphomicrobiales</taxon>
        <taxon>Brucellaceae</taxon>
        <taxon>Brucella/Ochrobactrum group</taxon>
        <taxon>Brucella</taxon>
    </lineage>
</organism>
<dbReference type="EMBL" id="CP000872">
    <property type="protein sequence ID" value="ABX62445.1"/>
    <property type="molecule type" value="Genomic_DNA"/>
</dbReference>
<dbReference type="RefSeq" id="WP_004691621.1">
    <property type="nucleotide sequence ID" value="NC_010103.1"/>
</dbReference>
<dbReference type="GeneID" id="55591041"/>
<dbReference type="KEGG" id="bcs:BCAN_A1414"/>
<dbReference type="HOGENOM" id="CLU_008142_4_2_5"/>
<dbReference type="PhylomeDB" id="A9M640"/>
<dbReference type="Proteomes" id="UP000001385">
    <property type="component" value="Chromosome I"/>
</dbReference>
<dbReference type="GO" id="GO:0005886">
    <property type="term" value="C:plasma membrane"/>
    <property type="evidence" value="ECO:0007669"/>
    <property type="project" value="UniProtKB-SubCell"/>
</dbReference>
<dbReference type="GO" id="GO:0015079">
    <property type="term" value="F:potassium ion transmembrane transporter activity"/>
    <property type="evidence" value="ECO:0007669"/>
    <property type="project" value="UniProtKB-UniRule"/>
</dbReference>
<dbReference type="GO" id="GO:0015293">
    <property type="term" value="F:symporter activity"/>
    <property type="evidence" value="ECO:0007669"/>
    <property type="project" value="UniProtKB-UniRule"/>
</dbReference>
<dbReference type="HAMAP" id="MF_01522">
    <property type="entry name" value="Kup"/>
    <property type="match status" value="1"/>
</dbReference>
<dbReference type="InterPro" id="IPR003855">
    <property type="entry name" value="K+_transporter"/>
</dbReference>
<dbReference type="InterPro" id="IPR053952">
    <property type="entry name" value="K_trans_C"/>
</dbReference>
<dbReference type="InterPro" id="IPR053951">
    <property type="entry name" value="K_trans_N"/>
</dbReference>
<dbReference type="InterPro" id="IPR023051">
    <property type="entry name" value="Kup"/>
</dbReference>
<dbReference type="PANTHER" id="PTHR30540:SF79">
    <property type="entry name" value="LOW AFFINITY POTASSIUM TRANSPORT SYSTEM PROTEIN KUP"/>
    <property type="match status" value="1"/>
</dbReference>
<dbReference type="PANTHER" id="PTHR30540">
    <property type="entry name" value="OSMOTIC STRESS POTASSIUM TRANSPORTER"/>
    <property type="match status" value="1"/>
</dbReference>
<dbReference type="Pfam" id="PF02705">
    <property type="entry name" value="K_trans"/>
    <property type="match status" value="1"/>
</dbReference>
<dbReference type="Pfam" id="PF22776">
    <property type="entry name" value="K_trans_C"/>
    <property type="match status" value="1"/>
</dbReference>
<evidence type="ECO:0000255" key="1">
    <source>
        <dbReference type="HAMAP-Rule" id="MF_01522"/>
    </source>
</evidence>
<proteinExistence type="inferred from homology"/>
<keyword id="KW-0997">Cell inner membrane</keyword>
<keyword id="KW-1003">Cell membrane</keyword>
<keyword id="KW-0406">Ion transport</keyword>
<keyword id="KW-0472">Membrane</keyword>
<keyword id="KW-0630">Potassium</keyword>
<keyword id="KW-0633">Potassium transport</keyword>
<keyword id="KW-1185">Reference proteome</keyword>
<keyword id="KW-0769">Symport</keyword>
<keyword id="KW-0812">Transmembrane</keyword>
<keyword id="KW-1133">Transmembrane helix</keyword>
<keyword id="KW-0813">Transport</keyword>
<feature type="chain" id="PRO_1000087556" description="Probable potassium transport system protein Kup">
    <location>
        <begin position="1"/>
        <end position="651"/>
    </location>
</feature>
<feature type="transmembrane region" description="Helical" evidence="1">
    <location>
        <begin position="41"/>
        <end position="61"/>
    </location>
</feature>
<feature type="transmembrane region" description="Helical" evidence="1">
    <location>
        <begin position="82"/>
        <end position="102"/>
    </location>
</feature>
<feature type="transmembrane region" description="Helical" evidence="1">
    <location>
        <begin position="130"/>
        <end position="150"/>
    </location>
</feature>
<feature type="transmembrane region" description="Helical" evidence="1">
    <location>
        <begin position="163"/>
        <end position="183"/>
    </location>
</feature>
<feature type="transmembrane region" description="Helical" evidence="1">
    <location>
        <begin position="194"/>
        <end position="214"/>
    </location>
</feature>
<feature type="transmembrane region" description="Helical" evidence="1">
    <location>
        <begin position="235"/>
        <end position="255"/>
    </location>
</feature>
<feature type="transmembrane region" description="Helical" evidence="1">
    <location>
        <begin position="276"/>
        <end position="296"/>
    </location>
</feature>
<feature type="transmembrane region" description="Helical" evidence="1">
    <location>
        <begin position="309"/>
        <end position="329"/>
    </location>
</feature>
<feature type="transmembrane region" description="Helical" evidence="1">
    <location>
        <begin position="366"/>
        <end position="386"/>
    </location>
</feature>
<feature type="transmembrane region" description="Helical" evidence="1">
    <location>
        <begin position="395"/>
        <end position="415"/>
    </location>
</feature>
<feature type="transmembrane region" description="Helical" evidence="1">
    <location>
        <begin position="426"/>
        <end position="446"/>
    </location>
</feature>
<feature type="transmembrane region" description="Helical" evidence="1">
    <location>
        <begin position="450"/>
        <end position="470"/>
    </location>
</feature>
<comment type="function">
    <text evidence="1">Transport of potassium into the cell. Likely operates as a K(+):H(+) symporter.</text>
</comment>
<comment type="catalytic activity">
    <reaction evidence="1">
        <text>K(+)(in) + H(+)(in) = K(+)(out) + H(+)(out)</text>
        <dbReference type="Rhea" id="RHEA:28490"/>
        <dbReference type="ChEBI" id="CHEBI:15378"/>
        <dbReference type="ChEBI" id="CHEBI:29103"/>
    </reaction>
    <physiologicalReaction direction="right-to-left" evidence="1">
        <dbReference type="Rhea" id="RHEA:28492"/>
    </physiologicalReaction>
</comment>
<comment type="subcellular location">
    <subcellularLocation>
        <location evidence="1">Cell inner membrane</location>
        <topology evidence="1">Multi-pass membrane protein</topology>
    </subcellularLocation>
</comment>
<comment type="similarity">
    <text evidence="1">Belongs to the HAK/KUP transporter (TC 2.A.72) family.</text>
</comment>
<accession>A9M640</accession>
<name>KUP_BRUC2</name>
<protein>
    <recommendedName>
        <fullName evidence="1">Probable potassium transport system protein Kup</fullName>
    </recommendedName>
</protein>